<feature type="signal peptide" evidence="2">
    <location>
        <begin position="1"/>
        <end position="20"/>
    </location>
</feature>
<feature type="propeptide" id="PRO_5001124504">
    <location>
        <begin position="21"/>
        <end position="47"/>
    </location>
</feature>
<feature type="chain" id="PRO_5001124503" description="Disintegrin DS-AS">
    <location>
        <begin position="48"/>
        <end position="111"/>
    </location>
</feature>
<feature type="domain" description="Disintegrin" evidence="3">
    <location>
        <begin position="47"/>
        <end position="111"/>
    </location>
</feature>
<feature type="short sequence motif" description="Cell attachment site">
    <location>
        <begin position="89"/>
        <end position="91"/>
    </location>
</feature>
<feature type="disulfide bond" evidence="3">
    <location>
        <begin position="53"/>
        <end position="76"/>
    </location>
</feature>
<feature type="disulfide bond" description="Interchain" evidence="3">
    <location>
        <position position="54"/>
    </location>
</feature>
<feature type="disulfide bond" description="Interchain" evidence="3">
    <location>
        <position position="59"/>
    </location>
</feature>
<feature type="disulfide bond" evidence="3">
    <location>
        <begin position="67"/>
        <end position="73"/>
    </location>
</feature>
<feature type="disulfide bond" evidence="3">
    <location>
        <begin position="72"/>
        <end position="97"/>
    </location>
</feature>
<feature type="disulfide bond" evidence="3">
    <location>
        <begin position="85"/>
        <end position="104"/>
    </location>
</feature>
<protein>
    <recommendedName>
        <fullName>Disintegrin DS-AS</fullName>
    </recommendedName>
</protein>
<name>DID_ATHSQ</name>
<comment type="function">
    <text evidence="4">Inhibits ADP-induced platelet aggregation in human platelet-rich plasma (IC(50) is 8 uM).</text>
</comment>
<comment type="subunit">
    <text evidence="1">Heterodimer; disulfide-linked.</text>
</comment>
<comment type="subcellular location">
    <subcellularLocation>
        <location>Secreted</location>
    </subcellularLocation>
</comment>
<comment type="mass spectrometry" mass="7042.0" method="MALDI" evidence="4"/>
<comment type="similarity">
    <text evidence="5">Belongs to the disintegrin family. Dimeric disintegrin subfamily.</text>
</comment>
<proteinExistence type="evidence at protein level"/>
<sequence length="111" mass="12216">MIQVLLVIICLAVFPYQGSCIILESGNVNDYEIVYPKKLIVLPTGAMNSPHPCCDPVTCKPKKGEHCISGPCCRNCKFINSGTICKRARGDDMNDYCTGTTPDCPRNPYKD</sequence>
<dbReference type="EMBL" id="HF543864">
    <property type="protein sequence ID" value="CCN27116.1"/>
    <property type="molecule type" value="mRNA"/>
</dbReference>
<dbReference type="GO" id="GO:0005576">
    <property type="term" value="C:extracellular region"/>
    <property type="evidence" value="ECO:0007669"/>
    <property type="project" value="UniProtKB-SubCell"/>
</dbReference>
<dbReference type="GO" id="GO:0090729">
    <property type="term" value="F:toxin activity"/>
    <property type="evidence" value="ECO:0007669"/>
    <property type="project" value="UniProtKB-KW"/>
</dbReference>
<dbReference type="Gene3D" id="4.10.70.10">
    <property type="entry name" value="Disintegrin domain"/>
    <property type="match status" value="1"/>
</dbReference>
<dbReference type="InterPro" id="IPR018358">
    <property type="entry name" value="Disintegrin_CS"/>
</dbReference>
<dbReference type="InterPro" id="IPR001762">
    <property type="entry name" value="Disintegrin_dom"/>
</dbReference>
<dbReference type="InterPro" id="IPR036436">
    <property type="entry name" value="Disintegrin_dom_sf"/>
</dbReference>
<dbReference type="PANTHER" id="PTHR11905">
    <property type="entry name" value="ADAM A DISINTEGRIN AND METALLOPROTEASE DOMAIN"/>
    <property type="match status" value="1"/>
</dbReference>
<dbReference type="PANTHER" id="PTHR11905:SF159">
    <property type="entry name" value="ADAM METALLOPROTEASE"/>
    <property type="match status" value="1"/>
</dbReference>
<dbReference type="Pfam" id="PF00200">
    <property type="entry name" value="Disintegrin"/>
    <property type="match status" value="1"/>
</dbReference>
<dbReference type="PRINTS" id="PR00289">
    <property type="entry name" value="DISINTEGRIN"/>
</dbReference>
<dbReference type="SMART" id="SM00050">
    <property type="entry name" value="DISIN"/>
    <property type="match status" value="1"/>
</dbReference>
<dbReference type="SUPFAM" id="SSF57552">
    <property type="entry name" value="Blood coagulation inhibitor (disintegrin)"/>
    <property type="match status" value="1"/>
</dbReference>
<dbReference type="PROSITE" id="PS00427">
    <property type="entry name" value="DISINTEGRIN_1"/>
    <property type="match status" value="1"/>
</dbReference>
<dbReference type="PROSITE" id="PS50214">
    <property type="entry name" value="DISINTEGRIN_2"/>
    <property type="match status" value="1"/>
</dbReference>
<reference key="1">
    <citation type="journal article" date="2013" name="Toxicon">
        <title>Cloning and characterisation of three novel disintegrin precursors from the venoms of three Atheris species: Atheris chlorechis, Atheris nitschei and Atheris squamigera.</title>
        <authorList>
            <person name="Wang H."/>
            <person name="Chen X."/>
            <person name="Wang L."/>
            <person name="Chen W."/>
            <person name="Zhou M."/>
            <person name="Chen T."/>
            <person name="Shaw C."/>
        </authorList>
    </citation>
    <scope>NUCLEOTIDE SEQUENCE [MRNA]</scope>
    <scope>FUNCTION</scope>
    <scope>MASS SPECTROMETRY</scope>
    <scope>IDENTIFICATION BY MASS SPECTROMETRY</scope>
    <source>
        <tissue>Venom</tissue>
        <tissue>Venom gland</tissue>
    </source>
</reference>
<accession>M5BGS2</accession>
<keyword id="KW-1217">Cell adhesion impairing toxin</keyword>
<keyword id="KW-1015">Disulfide bond</keyword>
<keyword id="KW-1199">Hemostasis impairing toxin</keyword>
<keyword id="KW-1201">Platelet aggregation inhibiting toxin</keyword>
<keyword id="KW-0964">Secreted</keyword>
<keyword id="KW-0732">Signal</keyword>
<keyword id="KW-0800">Toxin</keyword>
<organism>
    <name type="scientific">Atheris squamigera</name>
    <name type="common">Variable bush viper</name>
    <dbReference type="NCBI Taxonomy" id="110225"/>
    <lineage>
        <taxon>Eukaryota</taxon>
        <taxon>Metazoa</taxon>
        <taxon>Chordata</taxon>
        <taxon>Craniata</taxon>
        <taxon>Vertebrata</taxon>
        <taxon>Euteleostomi</taxon>
        <taxon>Lepidosauria</taxon>
        <taxon>Squamata</taxon>
        <taxon>Bifurcata</taxon>
        <taxon>Unidentata</taxon>
        <taxon>Episquamata</taxon>
        <taxon>Toxicofera</taxon>
        <taxon>Serpentes</taxon>
        <taxon>Colubroidea</taxon>
        <taxon>Viperidae</taxon>
        <taxon>Viperinae</taxon>
        <taxon>Atheris</taxon>
    </lineage>
</organism>
<evidence type="ECO:0000250" key="1"/>
<evidence type="ECO:0000255" key="2"/>
<evidence type="ECO:0000255" key="3">
    <source>
        <dbReference type="PROSITE-ProRule" id="PRU00068"/>
    </source>
</evidence>
<evidence type="ECO:0000269" key="4">
    <source>
    </source>
</evidence>
<evidence type="ECO:0000305" key="5"/>